<evidence type="ECO:0000255" key="1">
    <source>
        <dbReference type="HAMAP-Rule" id="MF_01635"/>
    </source>
</evidence>
<proteinExistence type="inferred from homology"/>
<keyword id="KW-0997">Cell inner membrane</keyword>
<keyword id="KW-1003">Cell membrane</keyword>
<keyword id="KW-0460">Magnesium</keyword>
<keyword id="KW-0472">Membrane</keyword>
<keyword id="KW-0808">Transferase</keyword>
<keyword id="KW-0812">Transmembrane</keyword>
<keyword id="KW-1133">Transmembrane helix</keyword>
<keyword id="KW-0831">Ubiquinone biosynthesis</keyword>
<accession>Q31TU8</accession>
<gene>
    <name evidence="1" type="primary">ubiA</name>
    <name type="ordered locus">SBO_4077</name>
</gene>
<sequence length="290" mass="32512">MEWSLTQNKLLAFHRLMRTDKPIGALLLLWPTLWALWVATPGVPQLWILAVFVAGVWLMRAAGCVVNDYADRKFDGHVKRTANRPLPSGAVTEKEARALFVVLVLISFLLVLTLNTMTILLSIAALALAWVYPFMKRYTHLPQVVLGAAFGWSIPMAFAAVSESVPLSCWLMFLANILWAVAYDTQYAMVDRDDDVKIGIKSTAILFGQYDKLIIGILQIGVLALMAIIGELNGLGWGYYWSILVAGALFVYQQKLIANREREACFKAFMNNNYVGLVLFLGLAMSYWHF</sequence>
<comment type="function">
    <text evidence="1">Catalyzes the prenylation of para-hydroxybenzoate (PHB) with an all-trans polyprenyl group. Mediates the second step in the final reaction sequence of ubiquinone-8 (UQ-8) biosynthesis, which is the condensation of the polyisoprenoid side chain with PHB, generating the first membrane-bound Q intermediate 3-octaprenyl-4-hydroxybenzoate.</text>
</comment>
<comment type="catalytic activity">
    <reaction evidence="1">
        <text>all-trans-octaprenyl diphosphate + 4-hydroxybenzoate = 4-hydroxy-3-(all-trans-octaprenyl)benzoate + diphosphate</text>
        <dbReference type="Rhea" id="RHEA:27782"/>
        <dbReference type="ChEBI" id="CHEBI:1617"/>
        <dbReference type="ChEBI" id="CHEBI:17879"/>
        <dbReference type="ChEBI" id="CHEBI:33019"/>
        <dbReference type="ChEBI" id="CHEBI:57711"/>
        <dbReference type="EC" id="2.5.1.39"/>
    </reaction>
</comment>
<comment type="cofactor">
    <cofactor evidence="1">
        <name>Mg(2+)</name>
        <dbReference type="ChEBI" id="CHEBI:18420"/>
    </cofactor>
</comment>
<comment type="pathway">
    <text evidence="1">Cofactor biosynthesis; ubiquinone biosynthesis.</text>
</comment>
<comment type="subcellular location">
    <subcellularLocation>
        <location evidence="1">Cell inner membrane</location>
        <topology evidence="1">Multi-pass membrane protein</topology>
    </subcellularLocation>
</comment>
<comment type="similarity">
    <text evidence="1">Belongs to the UbiA prenyltransferase family.</text>
</comment>
<protein>
    <recommendedName>
        <fullName evidence="1">4-hydroxybenzoate octaprenyltransferase</fullName>
        <ecNumber evidence="1">2.5.1.39</ecNumber>
    </recommendedName>
    <alternativeName>
        <fullName evidence="1">4-HB polyprenyltransferase</fullName>
    </alternativeName>
</protein>
<organism>
    <name type="scientific">Shigella boydii serotype 4 (strain Sb227)</name>
    <dbReference type="NCBI Taxonomy" id="300268"/>
    <lineage>
        <taxon>Bacteria</taxon>
        <taxon>Pseudomonadati</taxon>
        <taxon>Pseudomonadota</taxon>
        <taxon>Gammaproteobacteria</taxon>
        <taxon>Enterobacterales</taxon>
        <taxon>Enterobacteriaceae</taxon>
        <taxon>Shigella</taxon>
    </lineage>
</organism>
<feature type="chain" id="PRO_0000262842" description="4-hydroxybenzoate octaprenyltransferase">
    <location>
        <begin position="1"/>
        <end position="290"/>
    </location>
</feature>
<feature type="transmembrane region" description="Helical" evidence="1">
    <location>
        <begin position="23"/>
        <end position="43"/>
    </location>
</feature>
<feature type="transmembrane region" description="Helical" evidence="1">
    <location>
        <begin position="46"/>
        <end position="66"/>
    </location>
</feature>
<feature type="transmembrane region" description="Helical" evidence="1">
    <location>
        <begin position="99"/>
        <end position="119"/>
    </location>
</feature>
<feature type="transmembrane region" description="Helical" evidence="1">
    <location>
        <begin position="141"/>
        <end position="161"/>
    </location>
</feature>
<feature type="transmembrane region" description="Helical" evidence="1">
    <location>
        <begin position="163"/>
        <end position="183"/>
    </location>
</feature>
<feature type="transmembrane region" description="Helical" evidence="1">
    <location>
        <begin position="213"/>
        <end position="233"/>
    </location>
</feature>
<feature type="transmembrane region" description="Helical" evidence="1">
    <location>
        <begin position="234"/>
        <end position="254"/>
    </location>
</feature>
<feature type="transmembrane region" description="Helical" evidence="1">
    <location>
        <begin position="268"/>
        <end position="288"/>
    </location>
</feature>
<reference key="1">
    <citation type="journal article" date="2005" name="Nucleic Acids Res.">
        <title>Genome dynamics and diversity of Shigella species, the etiologic agents of bacillary dysentery.</title>
        <authorList>
            <person name="Yang F."/>
            <person name="Yang J."/>
            <person name="Zhang X."/>
            <person name="Chen L."/>
            <person name="Jiang Y."/>
            <person name="Yan Y."/>
            <person name="Tang X."/>
            <person name="Wang J."/>
            <person name="Xiong Z."/>
            <person name="Dong J."/>
            <person name="Xue Y."/>
            <person name="Zhu Y."/>
            <person name="Xu X."/>
            <person name="Sun L."/>
            <person name="Chen S."/>
            <person name="Nie H."/>
            <person name="Peng J."/>
            <person name="Xu J."/>
            <person name="Wang Y."/>
            <person name="Yuan Z."/>
            <person name="Wen Y."/>
            <person name="Yao Z."/>
            <person name="Shen Y."/>
            <person name="Qiang B."/>
            <person name="Hou Y."/>
            <person name="Yu J."/>
            <person name="Jin Q."/>
        </authorList>
    </citation>
    <scope>NUCLEOTIDE SEQUENCE [LARGE SCALE GENOMIC DNA]</scope>
    <source>
        <strain>Sb227</strain>
    </source>
</reference>
<dbReference type="EC" id="2.5.1.39" evidence="1"/>
<dbReference type="EMBL" id="CP000036">
    <property type="protein sequence ID" value="ABB68510.1"/>
    <property type="molecule type" value="Genomic_DNA"/>
</dbReference>
<dbReference type="RefSeq" id="WP_000455227.1">
    <property type="nucleotide sequence ID" value="NC_007613.1"/>
</dbReference>
<dbReference type="SMR" id="Q31TU8"/>
<dbReference type="GeneID" id="93777791"/>
<dbReference type="KEGG" id="sbo:SBO_4077"/>
<dbReference type="HOGENOM" id="CLU_034879_1_0_6"/>
<dbReference type="UniPathway" id="UPA00232"/>
<dbReference type="Proteomes" id="UP000007067">
    <property type="component" value="Chromosome"/>
</dbReference>
<dbReference type="GO" id="GO:0005886">
    <property type="term" value="C:plasma membrane"/>
    <property type="evidence" value="ECO:0007669"/>
    <property type="project" value="UniProtKB-SubCell"/>
</dbReference>
<dbReference type="GO" id="GO:0008412">
    <property type="term" value="F:4-hydroxybenzoate polyprenyltransferase activity"/>
    <property type="evidence" value="ECO:0007669"/>
    <property type="project" value="UniProtKB-UniRule"/>
</dbReference>
<dbReference type="GO" id="GO:0006744">
    <property type="term" value="P:ubiquinone biosynthetic process"/>
    <property type="evidence" value="ECO:0007669"/>
    <property type="project" value="UniProtKB-UniRule"/>
</dbReference>
<dbReference type="CDD" id="cd13959">
    <property type="entry name" value="PT_UbiA_COQ2"/>
    <property type="match status" value="1"/>
</dbReference>
<dbReference type="FunFam" id="1.10.357.140:FF:000002">
    <property type="entry name" value="4-hydroxybenzoate octaprenyltransferase"/>
    <property type="match status" value="1"/>
</dbReference>
<dbReference type="FunFam" id="1.20.120.1780:FF:000001">
    <property type="entry name" value="4-hydroxybenzoate octaprenyltransferase"/>
    <property type="match status" value="1"/>
</dbReference>
<dbReference type="Gene3D" id="1.10.357.140">
    <property type="entry name" value="UbiA prenyltransferase"/>
    <property type="match status" value="1"/>
</dbReference>
<dbReference type="Gene3D" id="1.20.120.1780">
    <property type="entry name" value="UbiA prenyltransferase"/>
    <property type="match status" value="1"/>
</dbReference>
<dbReference type="HAMAP" id="MF_01635">
    <property type="entry name" value="UbiA"/>
    <property type="match status" value="1"/>
</dbReference>
<dbReference type="InterPro" id="IPR006370">
    <property type="entry name" value="HB_polyprenyltransferase-like"/>
</dbReference>
<dbReference type="InterPro" id="IPR039653">
    <property type="entry name" value="Prenyltransferase"/>
</dbReference>
<dbReference type="InterPro" id="IPR000537">
    <property type="entry name" value="UbiA_prenyltransferase"/>
</dbReference>
<dbReference type="InterPro" id="IPR030470">
    <property type="entry name" value="UbiA_prenylTrfase_CS"/>
</dbReference>
<dbReference type="InterPro" id="IPR044878">
    <property type="entry name" value="UbiA_sf"/>
</dbReference>
<dbReference type="NCBIfam" id="TIGR01474">
    <property type="entry name" value="ubiA_proteo"/>
    <property type="match status" value="1"/>
</dbReference>
<dbReference type="PANTHER" id="PTHR11048:SF28">
    <property type="entry name" value="4-HYDROXYBENZOATE POLYPRENYLTRANSFERASE, MITOCHONDRIAL"/>
    <property type="match status" value="1"/>
</dbReference>
<dbReference type="PANTHER" id="PTHR11048">
    <property type="entry name" value="PRENYLTRANSFERASES"/>
    <property type="match status" value="1"/>
</dbReference>
<dbReference type="Pfam" id="PF01040">
    <property type="entry name" value="UbiA"/>
    <property type="match status" value="1"/>
</dbReference>
<dbReference type="PROSITE" id="PS00943">
    <property type="entry name" value="UBIA"/>
    <property type="match status" value="1"/>
</dbReference>
<name>UBIA_SHIBS</name>